<comment type="function">
    <text evidence="1">NDH-1 shuttles electrons from an unknown electron donor, via FMN and iron-sulfur (Fe-S) centers, to quinones in the respiratory and/or the photosynthetic chain. The immediate electron acceptor for the enzyme in this species is believed to be plastoquinone. Couples the redox reaction to proton translocation, and thus conserves the redox energy in a proton gradient. Cyanobacterial NDH-1 also plays a role in inorganic carbon-concentration.</text>
</comment>
<comment type="catalytic activity">
    <reaction evidence="1">
        <text>a plastoquinone + NADH + (n+1) H(+)(in) = a plastoquinol + NAD(+) + n H(+)(out)</text>
        <dbReference type="Rhea" id="RHEA:42608"/>
        <dbReference type="Rhea" id="RHEA-COMP:9561"/>
        <dbReference type="Rhea" id="RHEA-COMP:9562"/>
        <dbReference type="ChEBI" id="CHEBI:15378"/>
        <dbReference type="ChEBI" id="CHEBI:17757"/>
        <dbReference type="ChEBI" id="CHEBI:57540"/>
        <dbReference type="ChEBI" id="CHEBI:57945"/>
        <dbReference type="ChEBI" id="CHEBI:62192"/>
    </reaction>
</comment>
<comment type="catalytic activity">
    <reaction evidence="1">
        <text>a plastoquinone + NADPH + (n+1) H(+)(in) = a plastoquinol + NADP(+) + n H(+)(out)</text>
        <dbReference type="Rhea" id="RHEA:42612"/>
        <dbReference type="Rhea" id="RHEA-COMP:9561"/>
        <dbReference type="Rhea" id="RHEA-COMP:9562"/>
        <dbReference type="ChEBI" id="CHEBI:15378"/>
        <dbReference type="ChEBI" id="CHEBI:17757"/>
        <dbReference type="ChEBI" id="CHEBI:57783"/>
        <dbReference type="ChEBI" id="CHEBI:58349"/>
        <dbReference type="ChEBI" id="CHEBI:62192"/>
    </reaction>
</comment>
<comment type="cofactor">
    <cofactor evidence="1">
        <name>[4Fe-4S] cluster</name>
        <dbReference type="ChEBI" id="CHEBI:49883"/>
    </cofactor>
    <text evidence="1">Binds 1 [4Fe-4S] cluster.</text>
</comment>
<comment type="subunit">
    <text evidence="1">NDH-1 can be composed of about 15 different subunits; different subcomplexes with different compositions have been identified which probably have different functions.</text>
</comment>
<comment type="subcellular location">
    <subcellularLocation>
        <location evidence="1">Cellular thylakoid membrane</location>
        <topology evidence="1">Peripheral membrane protein</topology>
        <orientation evidence="1">Cytoplasmic side</orientation>
    </subcellularLocation>
</comment>
<comment type="similarity">
    <text evidence="1">Belongs to the complex I 20 kDa subunit family.</text>
</comment>
<feature type="chain" id="PRO_0000358458" description="NAD(P)H-quinone oxidoreductase subunit K">
    <location>
        <begin position="1"/>
        <end position="249"/>
    </location>
</feature>
<feature type="binding site" evidence="1">
    <location>
        <position position="65"/>
    </location>
    <ligand>
        <name>[4Fe-4S] cluster</name>
        <dbReference type="ChEBI" id="CHEBI:49883"/>
    </ligand>
</feature>
<feature type="binding site" evidence="1">
    <location>
        <position position="66"/>
    </location>
    <ligand>
        <name>[4Fe-4S] cluster</name>
        <dbReference type="ChEBI" id="CHEBI:49883"/>
    </ligand>
</feature>
<feature type="binding site" evidence="1">
    <location>
        <position position="130"/>
    </location>
    <ligand>
        <name>[4Fe-4S] cluster</name>
        <dbReference type="ChEBI" id="CHEBI:49883"/>
    </ligand>
</feature>
<feature type="binding site" evidence="1">
    <location>
        <position position="161"/>
    </location>
    <ligand>
        <name>[4Fe-4S] cluster</name>
        <dbReference type="ChEBI" id="CHEBI:49883"/>
    </ligand>
</feature>
<proteinExistence type="inferred from homology"/>
<accession>Q46M05</accession>
<dbReference type="EC" id="7.1.1.-" evidence="1"/>
<dbReference type="EMBL" id="CP000095">
    <property type="protein sequence ID" value="AAZ59147.1"/>
    <property type="molecule type" value="Genomic_DNA"/>
</dbReference>
<dbReference type="RefSeq" id="WP_011294292.1">
    <property type="nucleotide sequence ID" value="NC_007335.2"/>
</dbReference>
<dbReference type="SMR" id="Q46M05"/>
<dbReference type="STRING" id="59920.PMN2A_1659"/>
<dbReference type="KEGG" id="pmn:PMN2A_1659"/>
<dbReference type="HOGENOM" id="CLU_055737_2_1_3"/>
<dbReference type="PhylomeDB" id="Q46M05"/>
<dbReference type="Proteomes" id="UP000002535">
    <property type="component" value="Chromosome"/>
</dbReference>
<dbReference type="GO" id="GO:0031676">
    <property type="term" value="C:plasma membrane-derived thylakoid membrane"/>
    <property type="evidence" value="ECO:0007669"/>
    <property type="project" value="UniProtKB-SubCell"/>
</dbReference>
<dbReference type="GO" id="GO:0045271">
    <property type="term" value="C:respiratory chain complex I"/>
    <property type="evidence" value="ECO:0007669"/>
    <property type="project" value="TreeGrafter"/>
</dbReference>
<dbReference type="GO" id="GO:0051539">
    <property type="term" value="F:4 iron, 4 sulfur cluster binding"/>
    <property type="evidence" value="ECO:0007669"/>
    <property type="project" value="UniProtKB-KW"/>
</dbReference>
<dbReference type="GO" id="GO:0005506">
    <property type="term" value="F:iron ion binding"/>
    <property type="evidence" value="ECO:0007669"/>
    <property type="project" value="UniProtKB-UniRule"/>
</dbReference>
<dbReference type="GO" id="GO:0008137">
    <property type="term" value="F:NADH dehydrogenase (ubiquinone) activity"/>
    <property type="evidence" value="ECO:0007669"/>
    <property type="project" value="InterPro"/>
</dbReference>
<dbReference type="GO" id="GO:0048038">
    <property type="term" value="F:quinone binding"/>
    <property type="evidence" value="ECO:0007669"/>
    <property type="project" value="UniProtKB-KW"/>
</dbReference>
<dbReference type="GO" id="GO:0009060">
    <property type="term" value="P:aerobic respiration"/>
    <property type="evidence" value="ECO:0007669"/>
    <property type="project" value="TreeGrafter"/>
</dbReference>
<dbReference type="GO" id="GO:0015990">
    <property type="term" value="P:electron transport coupled proton transport"/>
    <property type="evidence" value="ECO:0007669"/>
    <property type="project" value="TreeGrafter"/>
</dbReference>
<dbReference type="GO" id="GO:0019684">
    <property type="term" value="P:photosynthesis, light reaction"/>
    <property type="evidence" value="ECO:0007669"/>
    <property type="project" value="UniProtKB-UniRule"/>
</dbReference>
<dbReference type="FunFam" id="3.40.50.12280:FF:000003">
    <property type="entry name" value="NAD(P)H-quinone oxidoreductase subunit K, chloroplastic"/>
    <property type="match status" value="1"/>
</dbReference>
<dbReference type="Gene3D" id="3.40.50.12280">
    <property type="match status" value="1"/>
</dbReference>
<dbReference type="HAMAP" id="MF_01356">
    <property type="entry name" value="NDH1_NuoB"/>
    <property type="match status" value="1"/>
</dbReference>
<dbReference type="InterPro" id="IPR006137">
    <property type="entry name" value="NADH_UbQ_OxRdtase-like_20kDa"/>
</dbReference>
<dbReference type="InterPro" id="IPR006138">
    <property type="entry name" value="NADH_UQ_OxRdtase_20Kd_su"/>
</dbReference>
<dbReference type="NCBIfam" id="TIGR01957">
    <property type="entry name" value="nuoB_fam"/>
    <property type="match status" value="1"/>
</dbReference>
<dbReference type="NCBIfam" id="NF005012">
    <property type="entry name" value="PRK06411.1"/>
    <property type="match status" value="1"/>
</dbReference>
<dbReference type="PANTHER" id="PTHR11995">
    <property type="entry name" value="NADH DEHYDROGENASE"/>
    <property type="match status" value="1"/>
</dbReference>
<dbReference type="PANTHER" id="PTHR11995:SF14">
    <property type="entry name" value="NADH DEHYDROGENASE [UBIQUINONE] IRON-SULFUR PROTEIN 7, MITOCHONDRIAL"/>
    <property type="match status" value="1"/>
</dbReference>
<dbReference type="Pfam" id="PF01058">
    <property type="entry name" value="Oxidored_q6"/>
    <property type="match status" value="1"/>
</dbReference>
<dbReference type="SUPFAM" id="SSF56770">
    <property type="entry name" value="HydA/Nqo6-like"/>
    <property type="match status" value="1"/>
</dbReference>
<dbReference type="PROSITE" id="PS01150">
    <property type="entry name" value="COMPLEX1_20K"/>
    <property type="match status" value="1"/>
</dbReference>
<evidence type="ECO:0000255" key="1">
    <source>
        <dbReference type="HAMAP-Rule" id="MF_01356"/>
    </source>
</evidence>
<keyword id="KW-0004">4Fe-4S</keyword>
<keyword id="KW-0408">Iron</keyword>
<keyword id="KW-0411">Iron-sulfur</keyword>
<keyword id="KW-0472">Membrane</keyword>
<keyword id="KW-0479">Metal-binding</keyword>
<keyword id="KW-0520">NAD</keyword>
<keyword id="KW-0521">NADP</keyword>
<keyword id="KW-0618">Plastoquinone</keyword>
<keyword id="KW-0874">Quinone</keyword>
<keyword id="KW-1185">Reference proteome</keyword>
<keyword id="KW-0793">Thylakoid</keyword>
<keyword id="KW-1278">Translocase</keyword>
<keyword id="KW-0813">Transport</keyword>
<reference key="1">
    <citation type="journal article" date="2007" name="PLoS Genet.">
        <title>Patterns and implications of gene gain and loss in the evolution of Prochlorococcus.</title>
        <authorList>
            <person name="Kettler G.C."/>
            <person name="Martiny A.C."/>
            <person name="Huang K."/>
            <person name="Zucker J."/>
            <person name="Coleman M.L."/>
            <person name="Rodrigue S."/>
            <person name="Chen F."/>
            <person name="Lapidus A."/>
            <person name="Ferriera S."/>
            <person name="Johnson J."/>
            <person name="Steglich C."/>
            <person name="Church G.M."/>
            <person name="Richardson P."/>
            <person name="Chisholm S.W."/>
        </authorList>
    </citation>
    <scope>NUCLEOTIDE SEQUENCE [LARGE SCALE GENOMIC DNA]</scope>
    <source>
        <strain>NATL2A</strain>
    </source>
</reference>
<protein>
    <recommendedName>
        <fullName evidence="1">NAD(P)H-quinone oxidoreductase subunit K</fullName>
        <ecNumber evidence="1">7.1.1.-</ecNumber>
    </recommendedName>
    <alternativeName>
        <fullName evidence="1">NAD(P)H dehydrogenase I subunit K</fullName>
    </alternativeName>
    <alternativeName>
        <fullName evidence="1">NDH-1 subunit K</fullName>
        <shortName evidence="1">NDH-K</shortName>
    </alternativeName>
</protein>
<name>NDHK_PROMT</name>
<gene>
    <name evidence="1" type="primary">ndhK</name>
    <name type="ordered locus">PMN2A_1659</name>
</gene>
<organism>
    <name type="scientific">Prochlorococcus marinus (strain NATL2A)</name>
    <dbReference type="NCBI Taxonomy" id="59920"/>
    <lineage>
        <taxon>Bacteria</taxon>
        <taxon>Bacillati</taxon>
        <taxon>Cyanobacteriota</taxon>
        <taxon>Cyanophyceae</taxon>
        <taxon>Synechococcales</taxon>
        <taxon>Prochlorococcaceae</taxon>
        <taxon>Prochlorococcus</taxon>
    </lineage>
</organism>
<sequence length="249" mass="27543">MELNPLKKSPSSEAVRNLREASCGPVGTPTVTNDLSENIILTSLEDLHNWARLSSLWPLLYGTACCFIEFAALIGSRFDFDRFGLVPRSSPRQADLLIVAGTVTMKMAPALVRLYEQMPDPKYVIAMGACTITGGMFSADSTTAVRGVDKLIPVDLYLPGCPPRPEAIFDAVIKLRKKVANESISERSKITQTHRYLTIPHKMKRVESKVNGQYLKAKTQLIALNPSLSEEFDQSLKEVQKISEELSSN</sequence>